<comment type="function">
    <text evidence="1">Catalyzes the phosphorylation of the 3'-hydroxyl group of dephosphocoenzyme A to form coenzyme A.</text>
</comment>
<comment type="catalytic activity">
    <reaction evidence="1">
        <text>3'-dephospho-CoA + ATP = ADP + CoA + H(+)</text>
        <dbReference type="Rhea" id="RHEA:18245"/>
        <dbReference type="ChEBI" id="CHEBI:15378"/>
        <dbReference type="ChEBI" id="CHEBI:30616"/>
        <dbReference type="ChEBI" id="CHEBI:57287"/>
        <dbReference type="ChEBI" id="CHEBI:57328"/>
        <dbReference type="ChEBI" id="CHEBI:456216"/>
        <dbReference type="EC" id="2.7.1.24"/>
    </reaction>
</comment>
<comment type="pathway">
    <text evidence="1">Cofactor biosynthesis; coenzyme A biosynthesis; CoA from (R)-pantothenate: step 5/5.</text>
</comment>
<comment type="subcellular location">
    <subcellularLocation>
        <location evidence="1">Cytoplasm</location>
    </subcellularLocation>
</comment>
<comment type="similarity">
    <text evidence="1">Belongs to the CoaE family.</text>
</comment>
<name>COAE_PROMA</name>
<organism>
    <name type="scientific">Prochlorococcus marinus (strain SARG / CCMP1375 / SS120)</name>
    <dbReference type="NCBI Taxonomy" id="167539"/>
    <lineage>
        <taxon>Bacteria</taxon>
        <taxon>Bacillati</taxon>
        <taxon>Cyanobacteriota</taxon>
        <taxon>Cyanophyceae</taxon>
        <taxon>Synechococcales</taxon>
        <taxon>Prochlorococcaceae</taxon>
        <taxon>Prochlorococcus</taxon>
    </lineage>
</organism>
<dbReference type="EC" id="2.7.1.24" evidence="1"/>
<dbReference type="EMBL" id="AE017126">
    <property type="protein sequence ID" value="AAP99099.1"/>
    <property type="molecule type" value="Genomic_DNA"/>
</dbReference>
<dbReference type="RefSeq" id="NP_874447.1">
    <property type="nucleotide sequence ID" value="NC_005042.1"/>
</dbReference>
<dbReference type="SMR" id="Q7VEG0"/>
<dbReference type="STRING" id="167539.Pro_0053"/>
<dbReference type="EnsemblBacteria" id="AAP99099">
    <property type="protein sequence ID" value="AAP99099"/>
    <property type="gene ID" value="Pro_0053"/>
</dbReference>
<dbReference type="KEGG" id="pma:Pro_0053"/>
<dbReference type="PATRIC" id="fig|167539.5.peg.56"/>
<dbReference type="eggNOG" id="COG0237">
    <property type="taxonomic scope" value="Bacteria"/>
</dbReference>
<dbReference type="HOGENOM" id="CLU_057180_0_0_3"/>
<dbReference type="OrthoDB" id="9812943at2"/>
<dbReference type="UniPathway" id="UPA00241">
    <property type="reaction ID" value="UER00356"/>
</dbReference>
<dbReference type="Proteomes" id="UP000001420">
    <property type="component" value="Chromosome"/>
</dbReference>
<dbReference type="GO" id="GO:0005737">
    <property type="term" value="C:cytoplasm"/>
    <property type="evidence" value="ECO:0007669"/>
    <property type="project" value="UniProtKB-SubCell"/>
</dbReference>
<dbReference type="GO" id="GO:0005524">
    <property type="term" value="F:ATP binding"/>
    <property type="evidence" value="ECO:0007669"/>
    <property type="project" value="UniProtKB-UniRule"/>
</dbReference>
<dbReference type="GO" id="GO:0004140">
    <property type="term" value="F:dephospho-CoA kinase activity"/>
    <property type="evidence" value="ECO:0007669"/>
    <property type="project" value="UniProtKB-UniRule"/>
</dbReference>
<dbReference type="GO" id="GO:0015937">
    <property type="term" value="P:coenzyme A biosynthetic process"/>
    <property type="evidence" value="ECO:0007669"/>
    <property type="project" value="UniProtKB-UniRule"/>
</dbReference>
<dbReference type="CDD" id="cd02022">
    <property type="entry name" value="DPCK"/>
    <property type="match status" value="1"/>
</dbReference>
<dbReference type="Gene3D" id="3.40.50.300">
    <property type="entry name" value="P-loop containing nucleotide triphosphate hydrolases"/>
    <property type="match status" value="1"/>
</dbReference>
<dbReference type="HAMAP" id="MF_00376">
    <property type="entry name" value="Dephospho_CoA_kinase"/>
    <property type="match status" value="1"/>
</dbReference>
<dbReference type="InterPro" id="IPR001977">
    <property type="entry name" value="Depp_CoAkinase"/>
</dbReference>
<dbReference type="InterPro" id="IPR027417">
    <property type="entry name" value="P-loop_NTPase"/>
</dbReference>
<dbReference type="NCBIfam" id="TIGR00152">
    <property type="entry name" value="dephospho-CoA kinase"/>
    <property type="match status" value="1"/>
</dbReference>
<dbReference type="PANTHER" id="PTHR10695:SF46">
    <property type="entry name" value="BIFUNCTIONAL COENZYME A SYNTHASE-RELATED"/>
    <property type="match status" value="1"/>
</dbReference>
<dbReference type="PANTHER" id="PTHR10695">
    <property type="entry name" value="DEPHOSPHO-COA KINASE-RELATED"/>
    <property type="match status" value="1"/>
</dbReference>
<dbReference type="Pfam" id="PF01121">
    <property type="entry name" value="CoaE"/>
    <property type="match status" value="1"/>
</dbReference>
<dbReference type="SUPFAM" id="SSF52540">
    <property type="entry name" value="P-loop containing nucleoside triphosphate hydrolases"/>
    <property type="match status" value="1"/>
</dbReference>
<dbReference type="PROSITE" id="PS51219">
    <property type="entry name" value="DPCK"/>
    <property type="match status" value="1"/>
</dbReference>
<evidence type="ECO:0000255" key="1">
    <source>
        <dbReference type="HAMAP-Rule" id="MF_00376"/>
    </source>
</evidence>
<accession>Q7VEG0</accession>
<proteinExistence type="inferred from homology"/>
<keyword id="KW-0067">ATP-binding</keyword>
<keyword id="KW-0173">Coenzyme A biosynthesis</keyword>
<keyword id="KW-0963">Cytoplasm</keyword>
<keyword id="KW-0418">Kinase</keyword>
<keyword id="KW-0547">Nucleotide-binding</keyword>
<keyword id="KW-1185">Reference proteome</keyword>
<keyword id="KW-0808">Transferase</keyword>
<sequence>MRVSKANALKRWKGSQRRIGITGGIASGKTSIGKYIESVKNTPILDADMFSREALTANQTIKDTIINRYGRTIVDKENTNSKTINRAALGEIIFHDKNERIWLENLLHPIIEKRFEEELEKHKLSSTIVLIIPLLFEANFTYLCSEVWLIYCSLDEQYERLMKRDGLNKEQAKYRIEAQLPLESKKILSDHIIDNTNKLDLSYPQVEVLL</sequence>
<protein>
    <recommendedName>
        <fullName evidence="1">Dephospho-CoA kinase</fullName>
        <ecNumber evidence="1">2.7.1.24</ecNumber>
    </recommendedName>
    <alternativeName>
        <fullName evidence="1">Dephosphocoenzyme A kinase</fullName>
    </alternativeName>
</protein>
<reference key="1">
    <citation type="journal article" date="2003" name="Proc. Natl. Acad. Sci. U.S.A.">
        <title>Genome sequence of the cyanobacterium Prochlorococcus marinus SS120, a nearly minimal oxyphototrophic genome.</title>
        <authorList>
            <person name="Dufresne A."/>
            <person name="Salanoubat M."/>
            <person name="Partensky F."/>
            <person name="Artiguenave F."/>
            <person name="Axmann I.M."/>
            <person name="Barbe V."/>
            <person name="Duprat S."/>
            <person name="Galperin M.Y."/>
            <person name="Koonin E.V."/>
            <person name="Le Gall F."/>
            <person name="Makarova K.S."/>
            <person name="Ostrowski M."/>
            <person name="Oztas S."/>
            <person name="Robert C."/>
            <person name="Rogozin I.B."/>
            <person name="Scanlan D.J."/>
            <person name="Tandeau de Marsac N."/>
            <person name="Weissenbach J."/>
            <person name="Wincker P."/>
            <person name="Wolf Y.I."/>
            <person name="Hess W.R."/>
        </authorList>
    </citation>
    <scope>NUCLEOTIDE SEQUENCE [LARGE SCALE GENOMIC DNA]</scope>
    <source>
        <strain>SARG / CCMP1375 / SS120</strain>
    </source>
</reference>
<feature type="chain" id="PRO_0000172977" description="Dephospho-CoA kinase">
    <location>
        <begin position="1"/>
        <end position="210"/>
    </location>
</feature>
<feature type="domain" description="DPCK" evidence="1">
    <location>
        <begin position="18"/>
        <end position="210"/>
    </location>
</feature>
<feature type="binding site" evidence="1">
    <location>
        <begin position="26"/>
        <end position="31"/>
    </location>
    <ligand>
        <name>ATP</name>
        <dbReference type="ChEBI" id="CHEBI:30616"/>
    </ligand>
</feature>
<gene>
    <name evidence="1" type="primary">coaE</name>
    <name type="ordered locus">Pro_0053</name>
</gene>